<protein>
    <recommendedName>
        <fullName>Uncharacterized protein MTH_574</fullName>
    </recommendedName>
</protein>
<reference key="1">
    <citation type="journal article" date="1997" name="J. Bacteriol.">
        <title>Complete genome sequence of Methanobacterium thermoautotrophicum deltaH: functional analysis and comparative genomics.</title>
        <authorList>
            <person name="Smith D.R."/>
            <person name="Doucette-Stamm L.A."/>
            <person name="Deloughery C."/>
            <person name="Lee H.-M."/>
            <person name="Dubois J."/>
            <person name="Aldredge T."/>
            <person name="Bashirzadeh R."/>
            <person name="Blakely D."/>
            <person name="Cook R."/>
            <person name="Gilbert K."/>
            <person name="Harrison D."/>
            <person name="Hoang L."/>
            <person name="Keagle P."/>
            <person name="Lumm W."/>
            <person name="Pothier B."/>
            <person name="Qiu D."/>
            <person name="Spadafora R."/>
            <person name="Vicare R."/>
            <person name="Wang Y."/>
            <person name="Wierzbowski J."/>
            <person name="Gibson R."/>
            <person name="Jiwani N."/>
            <person name="Caruso A."/>
            <person name="Bush D."/>
            <person name="Safer H."/>
            <person name="Patwell D."/>
            <person name="Prabhakar S."/>
            <person name="McDougall S."/>
            <person name="Shimer G."/>
            <person name="Goyal A."/>
            <person name="Pietrovski S."/>
            <person name="Church G.M."/>
            <person name="Daniels C.J."/>
            <person name="Mao J.-I."/>
            <person name="Rice P."/>
            <person name="Noelling J."/>
            <person name="Reeve J.N."/>
        </authorList>
    </citation>
    <scope>NUCLEOTIDE SEQUENCE [LARGE SCALE GENOMIC DNA]</scope>
    <source>
        <strain>ATCC 29096 / DSM 1053 / JCM 10044 / NBRC 100330 / Delta H</strain>
    </source>
</reference>
<evidence type="ECO:0000250" key="1"/>
<evidence type="ECO:0000305" key="2"/>
<dbReference type="EMBL" id="AE000666">
    <property type="protein sequence ID" value="AAB85080.1"/>
    <property type="molecule type" value="Genomic_DNA"/>
</dbReference>
<dbReference type="PIR" id="A69176">
    <property type="entry name" value="A69176"/>
</dbReference>
<dbReference type="RefSeq" id="WP_010876213.1">
    <property type="nucleotide sequence ID" value="NC_000916.1"/>
</dbReference>
<dbReference type="SMR" id="O26674"/>
<dbReference type="STRING" id="187420.MTH_574"/>
<dbReference type="PaxDb" id="187420-MTH_574"/>
<dbReference type="EnsemblBacteria" id="AAB85080">
    <property type="protein sequence ID" value="AAB85080"/>
    <property type="gene ID" value="MTH_574"/>
</dbReference>
<dbReference type="KEGG" id="mth:MTH_574"/>
<dbReference type="PATRIC" id="fig|187420.15.peg.552"/>
<dbReference type="HOGENOM" id="CLU_059021_3_2_2"/>
<dbReference type="InParanoid" id="O26674"/>
<dbReference type="Proteomes" id="UP000005223">
    <property type="component" value="Chromosome"/>
</dbReference>
<dbReference type="GO" id="GO:0010181">
    <property type="term" value="F:FMN binding"/>
    <property type="evidence" value="ECO:0007669"/>
    <property type="project" value="InterPro"/>
</dbReference>
<dbReference type="Gene3D" id="2.30.110.10">
    <property type="entry name" value="Electron Transport, Fmn-binding Protein, Chain A"/>
    <property type="match status" value="1"/>
</dbReference>
<dbReference type="InterPro" id="IPR002563">
    <property type="entry name" value="Flavin_Rdtase-like_dom"/>
</dbReference>
<dbReference type="InterPro" id="IPR012349">
    <property type="entry name" value="Split_barrel_FMN-bd"/>
</dbReference>
<dbReference type="PANTHER" id="PTHR33798:SF5">
    <property type="entry name" value="FLAVIN REDUCTASE LIKE DOMAIN-CONTAINING PROTEIN"/>
    <property type="match status" value="1"/>
</dbReference>
<dbReference type="PANTHER" id="PTHR33798">
    <property type="entry name" value="FLAVOPROTEIN OXYGENASE"/>
    <property type="match status" value="1"/>
</dbReference>
<dbReference type="Pfam" id="PF01613">
    <property type="entry name" value="Flavin_Reduct"/>
    <property type="match status" value="1"/>
</dbReference>
<dbReference type="SMART" id="SM00903">
    <property type="entry name" value="Flavin_Reduct"/>
    <property type="match status" value="1"/>
</dbReference>
<dbReference type="SUPFAM" id="SSF50475">
    <property type="entry name" value="FMN-binding split barrel"/>
    <property type="match status" value="1"/>
</dbReference>
<proteinExistence type="inferred from homology"/>
<feature type="chain" id="PRO_0000085529" description="Uncharacterized protein MTH_574">
    <location>
        <begin position="1"/>
        <end position="212"/>
    </location>
</feature>
<sequence>MILENFKRESLIPLPVTFISTTSKDGIRNIAPYSCVMPVLRPFDLICVASAKMRDTVVNIKDTGEFVINMPGVEMVDKVIPTASHVPFDVNEFELADLKERPSKKVKAPGIEGCYAWMECKLHNIYEDEYEGFPYLLILGKVVHLEVNDDIYNPEDGSWDIEKANPLMMVESDRGMHFCTVSDINKFEPYGAMFPDGKDPLAWMYEKRETRE</sequence>
<organism>
    <name type="scientific">Methanothermobacter thermautotrophicus (strain ATCC 29096 / DSM 1053 / JCM 10044 / NBRC 100330 / Delta H)</name>
    <name type="common">Methanobacterium thermoautotrophicum</name>
    <dbReference type="NCBI Taxonomy" id="187420"/>
    <lineage>
        <taxon>Archaea</taxon>
        <taxon>Methanobacteriati</taxon>
        <taxon>Methanobacteriota</taxon>
        <taxon>Methanomada group</taxon>
        <taxon>Methanobacteria</taxon>
        <taxon>Methanobacteriales</taxon>
        <taxon>Methanobacteriaceae</taxon>
        <taxon>Methanothermobacter</taxon>
    </lineage>
</organism>
<name>Y574_METTH</name>
<gene>
    <name type="ordered locus">MTH_574</name>
</gene>
<keyword id="KW-0285">Flavoprotein</keyword>
<keyword id="KW-0288">FMN</keyword>
<keyword id="KW-1185">Reference proteome</keyword>
<comment type="cofactor">
    <cofactor evidence="1">
        <name>FMN</name>
        <dbReference type="ChEBI" id="CHEBI:58210"/>
    </cofactor>
</comment>
<comment type="similarity">
    <text evidence="2">Belongs to the flavoredoxin family.</text>
</comment>
<accession>O26674</accession>